<comment type="function">
    <text evidence="1">Component of the proteasome core, a large protease complex with broad specificity involved in protein degradation.</text>
</comment>
<comment type="activity regulation">
    <text evidence="1">The formation of the proteasomal ATPase PAN-20S proteasome complex, via the docking of the C-termini of PAN into the intersubunit pockets in the alpha-rings, triggers opening of the gate for substrate entry. Interconversion between the open-gate and close-gate conformations leads to a dynamic regulation of the 20S proteasome proteolysis activity.</text>
</comment>
<comment type="subunit">
    <text evidence="1">The 20S proteasome core is composed of 14 alpha and 14 beta subunits that assemble into four stacked heptameric rings, resulting in a barrel-shaped structure. The two inner rings, each composed of seven catalytic beta subunits, are sandwiched by two outer rings, each composed of seven alpha subunits. The catalytic chamber with the active sites is on the inside of the barrel. Has a gated structure, the ends of the cylinder being occluded by the N-termini of the alpha-subunits. Is capped at one or both ends by the proteasome regulatory ATPase, PAN.</text>
</comment>
<comment type="subcellular location">
    <subcellularLocation>
        <location evidence="1">Cytoplasm</location>
    </subcellularLocation>
</comment>
<comment type="similarity">
    <text evidence="1">Belongs to the peptidase T1A family.</text>
</comment>
<sequence length="247" mass="27020">MAPQMGYDRAITVFSPDGRLFQVEYAREAVKRGTTAVGIKAADGVVLLVDKRITSRLVEAESIEKIFQIDEHIGAATSGLVADARSLVDRARVEAQVNRVSYDEPIGVEVISKKICDHKQTYTQYGGVRPYGTALLIAGVDDNKPRLFETDPSGALLEYKATAIGAGRNAVVEVFEADYREDMNMDAAILLGMDALYKAAEGKFDAGTLEVGVVSLEDKKFRKLGPEEVENYVQQILEKHKGTESSE</sequence>
<feature type="chain" id="PRO_0000124173" description="Proteasome subunit alpha">
    <location>
        <begin position="1"/>
        <end position="247"/>
    </location>
</feature>
<protein>
    <recommendedName>
        <fullName evidence="1">Proteasome subunit alpha</fullName>
    </recommendedName>
    <alternativeName>
        <fullName evidence="1">20S proteasome alpha subunit</fullName>
    </alternativeName>
    <alternativeName>
        <fullName evidence="1">Proteasome core protein PsmA</fullName>
    </alternativeName>
</protein>
<accession>Q8TPX5</accession>
<gene>
    <name evidence="1" type="primary">psmA</name>
    <name type="ordered locus">MA_1779</name>
</gene>
<name>PSA_METAC</name>
<evidence type="ECO:0000255" key="1">
    <source>
        <dbReference type="HAMAP-Rule" id="MF_00289"/>
    </source>
</evidence>
<proteinExistence type="inferred from homology"/>
<dbReference type="EMBL" id="AE010299">
    <property type="protein sequence ID" value="AAM05185.1"/>
    <property type="molecule type" value="Genomic_DNA"/>
</dbReference>
<dbReference type="SMR" id="Q8TPX5"/>
<dbReference type="FunCoup" id="Q8TPX5">
    <property type="interactions" value="116"/>
</dbReference>
<dbReference type="STRING" id="188937.MA_1779"/>
<dbReference type="EnsemblBacteria" id="AAM05185">
    <property type="protein sequence ID" value="AAM05185"/>
    <property type="gene ID" value="MA_1779"/>
</dbReference>
<dbReference type="KEGG" id="mac:MA_1779"/>
<dbReference type="HOGENOM" id="CLU_035750_4_1_2"/>
<dbReference type="InParanoid" id="Q8TPX5"/>
<dbReference type="PhylomeDB" id="Q8TPX5"/>
<dbReference type="Proteomes" id="UP000002487">
    <property type="component" value="Chromosome"/>
</dbReference>
<dbReference type="GO" id="GO:0005737">
    <property type="term" value="C:cytoplasm"/>
    <property type="evidence" value="ECO:0007669"/>
    <property type="project" value="UniProtKB-SubCell"/>
</dbReference>
<dbReference type="GO" id="GO:0019773">
    <property type="term" value="C:proteasome core complex, alpha-subunit complex"/>
    <property type="evidence" value="ECO:0000250"/>
    <property type="project" value="UniProtKB"/>
</dbReference>
<dbReference type="GO" id="GO:0004298">
    <property type="term" value="F:threonine-type endopeptidase activity"/>
    <property type="evidence" value="ECO:0007669"/>
    <property type="project" value="InterPro"/>
</dbReference>
<dbReference type="GO" id="GO:0043161">
    <property type="term" value="P:proteasome-mediated ubiquitin-dependent protein catabolic process"/>
    <property type="evidence" value="ECO:0000318"/>
    <property type="project" value="GO_Central"/>
</dbReference>
<dbReference type="CDD" id="cd03756">
    <property type="entry name" value="proteasome_alpha_archeal"/>
    <property type="match status" value="1"/>
</dbReference>
<dbReference type="FunFam" id="3.60.20.10:FF:000004">
    <property type="entry name" value="Proteasome subunit alpha type-4"/>
    <property type="match status" value="1"/>
</dbReference>
<dbReference type="Gene3D" id="3.60.20.10">
    <property type="entry name" value="Glutamine Phosphoribosylpyrophosphate, subunit 1, domain 1"/>
    <property type="match status" value="1"/>
</dbReference>
<dbReference type="HAMAP" id="MF_00289_A">
    <property type="entry name" value="Proteasome_A_A"/>
    <property type="match status" value="1"/>
</dbReference>
<dbReference type="InterPro" id="IPR029055">
    <property type="entry name" value="Ntn_hydrolases_N"/>
</dbReference>
<dbReference type="InterPro" id="IPR050115">
    <property type="entry name" value="Proteasome_alpha"/>
</dbReference>
<dbReference type="InterPro" id="IPR023332">
    <property type="entry name" value="Proteasome_alpha-type"/>
</dbReference>
<dbReference type="InterPro" id="IPR019982">
    <property type="entry name" value="Proteasome_asu_arc"/>
</dbReference>
<dbReference type="InterPro" id="IPR000426">
    <property type="entry name" value="Proteasome_asu_N"/>
</dbReference>
<dbReference type="InterPro" id="IPR001353">
    <property type="entry name" value="Proteasome_sua/b"/>
</dbReference>
<dbReference type="NCBIfam" id="TIGR03633">
    <property type="entry name" value="arc_protsome_A"/>
    <property type="match status" value="1"/>
</dbReference>
<dbReference type="NCBIfam" id="NF003075">
    <property type="entry name" value="PRK03996.1"/>
    <property type="match status" value="1"/>
</dbReference>
<dbReference type="PANTHER" id="PTHR11599">
    <property type="entry name" value="PROTEASOME SUBUNIT ALPHA/BETA"/>
    <property type="match status" value="1"/>
</dbReference>
<dbReference type="Pfam" id="PF00227">
    <property type="entry name" value="Proteasome"/>
    <property type="match status" value="1"/>
</dbReference>
<dbReference type="Pfam" id="PF10584">
    <property type="entry name" value="Proteasome_A_N"/>
    <property type="match status" value="1"/>
</dbReference>
<dbReference type="SMART" id="SM00948">
    <property type="entry name" value="Proteasome_A_N"/>
    <property type="match status" value="1"/>
</dbReference>
<dbReference type="SUPFAM" id="SSF56235">
    <property type="entry name" value="N-terminal nucleophile aminohydrolases (Ntn hydrolases)"/>
    <property type="match status" value="1"/>
</dbReference>
<dbReference type="PROSITE" id="PS00388">
    <property type="entry name" value="PROTEASOME_ALPHA_1"/>
    <property type="match status" value="1"/>
</dbReference>
<dbReference type="PROSITE" id="PS51475">
    <property type="entry name" value="PROTEASOME_ALPHA_2"/>
    <property type="match status" value="1"/>
</dbReference>
<keyword id="KW-0963">Cytoplasm</keyword>
<keyword id="KW-0647">Proteasome</keyword>
<keyword id="KW-1185">Reference proteome</keyword>
<reference key="1">
    <citation type="journal article" date="2002" name="Genome Res.">
        <title>The genome of Methanosarcina acetivorans reveals extensive metabolic and physiological diversity.</title>
        <authorList>
            <person name="Galagan J.E."/>
            <person name="Nusbaum C."/>
            <person name="Roy A."/>
            <person name="Endrizzi M.G."/>
            <person name="Macdonald P."/>
            <person name="FitzHugh W."/>
            <person name="Calvo S."/>
            <person name="Engels R."/>
            <person name="Smirnov S."/>
            <person name="Atnoor D."/>
            <person name="Brown A."/>
            <person name="Allen N."/>
            <person name="Naylor J."/>
            <person name="Stange-Thomann N."/>
            <person name="DeArellano K."/>
            <person name="Johnson R."/>
            <person name="Linton L."/>
            <person name="McEwan P."/>
            <person name="McKernan K."/>
            <person name="Talamas J."/>
            <person name="Tirrell A."/>
            <person name="Ye W."/>
            <person name="Zimmer A."/>
            <person name="Barber R.D."/>
            <person name="Cann I."/>
            <person name="Graham D.E."/>
            <person name="Grahame D.A."/>
            <person name="Guss A.M."/>
            <person name="Hedderich R."/>
            <person name="Ingram-Smith C."/>
            <person name="Kuettner H.C."/>
            <person name="Krzycki J.A."/>
            <person name="Leigh J.A."/>
            <person name="Li W."/>
            <person name="Liu J."/>
            <person name="Mukhopadhyay B."/>
            <person name="Reeve J.N."/>
            <person name="Smith K."/>
            <person name="Springer T.A."/>
            <person name="Umayam L.A."/>
            <person name="White O."/>
            <person name="White R.H."/>
            <person name="de Macario E.C."/>
            <person name="Ferry J.G."/>
            <person name="Jarrell K.F."/>
            <person name="Jing H."/>
            <person name="Macario A.J.L."/>
            <person name="Paulsen I.T."/>
            <person name="Pritchett M."/>
            <person name="Sowers K.R."/>
            <person name="Swanson R.V."/>
            <person name="Zinder S.H."/>
            <person name="Lander E."/>
            <person name="Metcalf W.W."/>
            <person name="Birren B."/>
        </authorList>
    </citation>
    <scope>NUCLEOTIDE SEQUENCE [LARGE SCALE GENOMIC DNA]</scope>
    <source>
        <strain>ATCC 35395 / DSM 2834 / JCM 12185 / C2A</strain>
    </source>
</reference>
<organism>
    <name type="scientific">Methanosarcina acetivorans (strain ATCC 35395 / DSM 2834 / JCM 12185 / C2A)</name>
    <dbReference type="NCBI Taxonomy" id="188937"/>
    <lineage>
        <taxon>Archaea</taxon>
        <taxon>Methanobacteriati</taxon>
        <taxon>Methanobacteriota</taxon>
        <taxon>Stenosarchaea group</taxon>
        <taxon>Methanomicrobia</taxon>
        <taxon>Methanosarcinales</taxon>
        <taxon>Methanosarcinaceae</taxon>
        <taxon>Methanosarcina</taxon>
    </lineage>
</organism>